<name>RS21_ECO81</name>
<protein>
    <recommendedName>
        <fullName evidence="1">Small ribosomal subunit protein bS21</fullName>
    </recommendedName>
    <alternativeName>
        <fullName evidence="3">30S ribosomal protein S21</fullName>
    </alternativeName>
</protein>
<dbReference type="EMBL" id="CU928162">
    <property type="protein sequence ID" value="CAR09883.2"/>
    <property type="molecule type" value="Genomic_DNA"/>
</dbReference>
<dbReference type="RefSeq" id="WP_001144069.1">
    <property type="nucleotide sequence ID" value="NC_011745.1"/>
</dbReference>
<dbReference type="SMR" id="B7N0L5"/>
<dbReference type="GeneID" id="98390195"/>
<dbReference type="KEGG" id="ecq:ECED1_3734"/>
<dbReference type="HOGENOM" id="CLU_159258_1_0_6"/>
<dbReference type="Proteomes" id="UP000000748">
    <property type="component" value="Chromosome"/>
</dbReference>
<dbReference type="GO" id="GO:1990904">
    <property type="term" value="C:ribonucleoprotein complex"/>
    <property type="evidence" value="ECO:0007669"/>
    <property type="project" value="UniProtKB-KW"/>
</dbReference>
<dbReference type="GO" id="GO:0005840">
    <property type="term" value="C:ribosome"/>
    <property type="evidence" value="ECO:0007669"/>
    <property type="project" value="UniProtKB-KW"/>
</dbReference>
<dbReference type="GO" id="GO:0003735">
    <property type="term" value="F:structural constituent of ribosome"/>
    <property type="evidence" value="ECO:0007669"/>
    <property type="project" value="InterPro"/>
</dbReference>
<dbReference type="GO" id="GO:0006412">
    <property type="term" value="P:translation"/>
    <property type="evidence" value="ECO:0007669"/>
    <property type="project" value="UniProtKB-UniRule"/>
</dbReference>
<dbReference type="FunFam" id="1.20.5.1150:FF:000001">
    <property type="entry name" value="30S ribosomal protein S21"/>
    <property type="match status" value="1"/>
</dbReference>
<dbReference type="Gene3D" id="1.20.5.1150">
    <property type="entry name" value="Ribosomal protein S8"/>
    <property type="match status" value="1"/>
</dbReference>
<dbReference type="HAMAP" id="MF_00358">
    <property type="entry name" value="Ribosomal_bS21"/>
    <property type="match status" value="1"/>
</dbReference>
<dbReference type="InterPro" id="IPR001911">
    <property type="entry name" value="Ribosomal_bS21"/>
</dbReference>
<dbReference type="InterPro" id="IPR018278">
    <property type="entry name" value="Ribosomal_bS21_CS"/>
</dbReference>
<dbReference type="InterPro" id="IPR038380">
    <property type="entry name" value="Ribosomal_bS21_sf"/>
</dbReference>
<dbReference type="NCBIfam" id="TIGR00030">
    <property type="entry name" value="S21p"/>
    <property type="match status" value="1"/>
</dbReference>
<dbReference type="PANTHER" id="PTHR21109">
    <property type="entry name" value="MITOCHONDRIAL 28S RIBOSOMAL PROTEIN S21"/>
    <property type="match status" value="1"/>
</dbReference>
<dbReference type="PANTHER" id="PTHR21109:SF22">
    <property type="entry name" value="SMALL RIBOSOMAL SUBUNIT PROTEIN BS21"/>
    <property type="match status" value="1"/>
</dbReference>
<dbReference type="Pfam" id="PF01165">
    <property type="entry name" value="Ribosomal_S21"/>
    <property type="match status" value="1"/>
</dbReference>
<dbReference type="PRINTS" id="PR00976">
    <property type="entry name" value="RIBOSOMALS21"/>
</dbReference>
<dbReference type="PROSITE" id="PS01181">
    <property type="entry name" value="RIBOSOMAL_S21"/>
    <property type="match status" value="1"/>
</dbReference>
<comment type="similarity">
    <text evidence="1">Belongs to the bacterial ribosomal protein bS21 family.</text>
</comment>
<keyword id="KW-0687">Ribonucleoprotein</keyword>
<keyword id="KW-0689">Ribosomal protein</keyword>
<organism>
    <name type="scientific">Escherichia coli O81 (strain ED1a)</name>
    <dbReference type="NCBI Taxonomy" id="585397"/>
    <lineage>
        <taxon>Bacteria</taxon>
        <taxon>Pseudomonadati</taxon>
        <taxon>Pseudomonadota</taxon>
        <taxon>Gammaproteobacteria</taxon>
        <taxon>Enterobacterales</taxon>
        <taxon>Enterobacteriaceae</taxon>
        <taxon>Escherichia</taxon>
    </lineage>
</organism>
<accession>B7N0L5</accession>
<feature type="chain" id="PRO_1000194293" description="Small ribosomal subunit protein bS21">
    <location>
        <begin position="1"/>
        <end position="71"/>
    </location>
</feature>
<feature type="region of interest" description="Disordered" evidence="2">
    <location>
        <begin position="43"/>
        <end position="71"/>
    </location>
</feature>
<feature type="compositionally biased region" description="Basic residues" evidence="2">
    <location>
        <begin position="46"/>
        <end position="59"/>
    </location>
</feature>
<feature type="compositionally biased region" description="Basic and acidic residues" evidence="2">
    <location>
        <begin position="60"/>
        <end position="71"/>
    </location>
</feature>
<sequence length="71" mass="8500">MPVIKVRENEPFDVALRRFKRSCEKAGVLAEVRRREFYEKPTTERKRAKASAVKRHAKKLARENARRTRLY</sequence>
<proteinExistence type="inferred from homology"/>
<gene>
    <name evidence="1" type="primary">rpsU</name>
    <name type="ordered locus">ECED1_3734</name>
</gene>
<reference key="1">
    <citation type="journal article" date="2009" name="PLoS Genet.">
        <title>Organised genome dynamics in the Escherichia coli species results in highly diverse adaptive paths.</title>
        <authorList>
            <person name="Touchon M."/>
            <person name="Hoede C."/>
            <person name="Tenaillon O."/>
            <person name="Barbe V."/>
            <person name="Baeriswyl S."/>
            <person name="Bidet P."/>
            <person name="Bingen E."/>
            <person name="Bonacorsi S."/>
            <person name="Bouchier C."/>
            <person name="Bouvet O."/>
            <person name="Calteau A."/>
            <person name="Chiapello H."/>
            <person name="Clermont O."/>
            <person name="Cruveiller S."/>
            <person name="Danchin A."/>
            <person name="Diard M."/>
            <person name="Dossat C."/>
            <person name="Karoui M.E."/>
            <person name="Frapy E."/>
            <person name="Garry L."/>
            <person name="Ghigo J.M."/>
            <person name="Gilles A.M."/>
            <person name="Johnson J."/>
            <person name="Le Bouguenec C."/>
            <person name="Lescat M."/>
            <person name="Mangenot S."/>
            <person name="Martinez-Jehanne V."/>
            <person name="Matic I."/>
            <person name="Nassif X."/>
            <person name="Oztas S."/>
            <person name="Petit M.A."/>
            <person name="Pichon C."/>
            <person name="Rouy Z."/>
            <person name="Ruf C.S."/>
            <person name="Schneider D."/>
            <person name="Tourret J."/>
            <person name="Vacherie B."/>
            <person name="Vallenet D."/>
            <person name="Medigue C."/>
            <person name="Rocha E.P.C."/>
            <person name="Denamur E."/>
        </authorList>
    </citation>
    <scope>NUCLEOTIDE SEQUENCE [LARGE SCALE GENOMIC DNA]</scope>
    <source>
        <strain>ED1a</strain>
    </source>
</reference>
<evidence type="ECO:0000255" key="1">
    <source>
        <dbReference type="HAMAP-Rule" id="MF_00358"/>
    </source>
</evidence>
<evidence type="ECO:0000256" key="2">
    <source>
        <dbReference type="SAM" id="MobiDB-lite"/>
    </source>
</evidence>
<evidence type="ECO:0000305" key="3"/>